<gene>
    <name type="primary">trpF</name>
    <name type="ordered locus">VNG_1648G</name>
</gene>
<evidence type="ECO:0000305" key="1"/>
<protein>
    <recommendedName>
        <fullName>N-(5'-phosphoribosyl)anthranilate isomerase</fullName>
        <shortName>PRAI</shortName>
        <ecNumber>5.3.1.24</ecNumber>
    </recommendedName>
</protein>
<keyword id="KW-0028">Amino-acid biosynthesis</keyword>
<keyword id="KW-0057">Aromatic amino acid biosynthesis</keyword>
<keyword id="KW-0413">Isomerase</keyword>
<keyword id="KW-1185">Reference proteome</keyword>
<keyword id="KW-0822">Tryptophan biosynthesis</keyword>
<comment type="catalytic activity">
    <reaction>
        <text>N-(5-phospho-beta-D-ribosyl)anthranilate = 1-(2-carboxyphenylamino)-1-deoxy-D-ribulose 5-phosphate</text>
        <dbReference type="Rhea" id="RHEA:21540"/>
        <dbReference type="ChEBI" id="CHEBI:18277"/>
        <dbReference type="ChEBI" id="CHEBI:58613"/>
        <dbReference type="EC" id="5.3.1.24"/>
    </reaction>
</comment>
<comment type="pathway">
    <text>Amino-acid biosynthesis; L-tryptophan biosynthesis; L-tryptophan from chorismate: step 3/5.</text>
</comment>
<comment type="similarity">
    <text evidence="1">Belongs to the TrpF family.</text>
</comment>
<reference key="1">
    <citation type="journal article" date="2000" name="Proc. Natl. Acad. Sci. U.S.A.">
        <title>Genome sequence of Halobacterium species NRC-1.</title>
        <authorList>
            <person name="Ng W.V."/>
            <person name="Kennedy S.P."/>
            <person name="Mahairas G.G."/>
            <person name="Berquist B."/>
            <person name="Pan M."/>
            <person name="Shukla H.D."/>
            <person name="Lasky S.R."/>
            <person name="Baliga N.S."/>
            <person name="Thorsson V."/>
            <person name="Sbrogna J."/>
            <person name="Swartzell S."/>
            <person name="Weir D."/>
            <person name="Hall J."/>
            <person name="Dahl T.A."/>
            <person name="Welti R."/>
            <person name="Goo Y.A."/>
            <person name="Leithauser B."/>
            <person name="Keller K."/>
            <person name="Cruz R."/>
            <person name="Danson M.J."/>
            <person name="Hough D.W."/>
            <person name="Maddocks D.G."/>
            <person name="Jablonski P.E."/>
            <person name="Krebs M.P."/>
            <person name="Angevine C.M."/>
            <person name="Dale H."/>
            <person name="Isenbarger T.A."/>
            <person name="Peck R.F."/>
            <person name="Pohlschroder M."/>
            <person name="Spudich J.L."/>
            <person name="Jung K.-H."/>
            <person name="Alam M."/>
            <person name="Freitas T."/>
            <person name="Hou S."/>
            <person name="Daniels C.J."/>
            <person name="Dennis P.P."/>
            <person name="Omer A.D."/>
            <person name="Ebhardt H."/>
            <person name="Lowe T.M."/>
            <person name="Liang P."/>
            <person name="Riley M."/>
            <person name="Hood L."/>
            <person name="DasSarma S."/>
        </authorList>
    </citation>
    <scope>NUCLEOTIDE SEQUENCE [LARGE SCALE GENOMIC DNA]</scope>
    <source>
        <strain>ATCC 700922 / JCM 11081 / NRC-1</strain>
    </source>
</reference>
<name>TRPF_HALSA</name>
<feature type="chain" id="PRO_0000154400" description="N-(5'-phosphoribosyl)anthranilate isomerase">
    <location>
        <begin position="1"/>
        <end position="218"/>
    </location>
</feature>
<sequence length="218" mass="21903">MTRVKVCGLTTERDHAAAVAAGADAVGIIADVPVETPREVSVETATALRAATPPFVTSVLVTMPATPEHAVDLVRTVAPDAVQLHGDLPVGDAAYVAANTPCPVIKAVTAGDQSAARYADVVDALLVDSPPTDDAGAGGGTGRTHDWAATRAFADRVDTPVVLAGGLTPANVADAVDTVDPFAVDVASGVEARPGEKDHAAVSAFVARATATPDPTLT</sequence>
<proteinExistence type="inferred from homology"/>
<accession>Q9HPG4</accession>
<dbReference type="EC" id="5.3.1.24"/>
<dbReference type="EMBL" id="AE004437">
    <property type="protein sequence ID" value="AAG19903.1"/>
    <property type="molecule type" value="Genomic_DNA"/>
</dbReference>
<dbReference type="PIR" id="C84317">
    <property type="entry name" value="C84317"/>
</dbReference>
<dbReference type="RefSeq" id="WP_010903201.1">
    <property type="nucleotide sequence ID" value="NC_002607.1"/>
</dbReference>
<dbReference type="SMR" id="Q9HPG4"/>
<dbReference type="FunCoup" id="Q9HPG4">
    <property type="interactions" value="51"/>
</dbReference>
<dbReference type="STRING" id="64091.VNG_1648G"/>
<dbReference type="PaxDb" id="64091-VNG_1648G"/>
<dbReference type="KEGG" id="hal:VNG_1648G"/>
<dbReference type="PATRIC" id="fig|64091.14.peg.1256"/>
<dbReference type="HOGENOM" id="CLU_076364_2_1_2"/>
<dbReference type="InParanoid" id="Q9HPG4"/>
<dbReference type="OrthoDB" id="27513at2157"/>
<dbReference type="PhylomeDB" id="Q9HPG4"/>
<dbReference type="UniPathway" id="UPA00035">
    <property type="reaction ID" value="UER00042"/>
</dbReference>
<dbReference type="Proteomes" id="UP000000554">
    <property type="component" value="Chromosome"/>
</dbReference>
<dbReference type="GO" id="GO:0004640">
    <property type="term" value="F:phosphoribosylanthranilate isomerase activity"/>
    <property type="evidence" value="ECO:0000318"/>
    <property type="project" value="GO_Central"/>
</dbReference>
<dbReference type="GO" id="GO:0000162">
    <property type="term" value="P:L-tryptophan biosynthetic process"/>
    <property type="evidence" value="ECO:0000318"/>
    <property type="project" value="GO_Central"/>
</dbReference>
<dbReference type="CDD" id="cd00405">
    <property type="entry name" value="PRAI"/>
    <property type="match status" value="1"/>
</dbReference>
<dbReference type="Gene3D" id="3.20.20.70">
    <property type="entry name" value="Aldolase class I"/>
    <property type="match status" value="1"/>
</dbReference>
<dbReference type="HAMAP" id="MF_00135">
    <property type="entry name" value="PRAI"/>
    <property type="match status" value="1"/>
</dbReference>
<dbReference type="InterPro" id="IPR013785">
    <property type="entry name" value="Aldolase_TIM"/>
</dbReference>
<dbReference type="InterPro" id="IPR001240">
    <property type="entry name" value="PRAI_dom"/>
</dbReference>
<dbReference type="InterPro" id="IPR011060">
    <property type="entry name" value="RibuloseP-bd_barrel"/>
</dbReference>
<dbReference type="InterPro" id="IPR044643">
    <property type="entry name" value="TrpF_fam"/>
</dbReference>
<dbReference type="PANTHER" id="PTHR42894">
    <property type="entry name" value="N-(5'-PHOSPHORIBOSYL)ANTHRANILATE ISOMERASE"/>
    <property type="match status" value="1"/>
</dbReference>
<dbReference type="PANTHER" id="PTHR42894:SF1">
    <property type="entry name" value="N-(5'-PHOSPHORIBOSYL)ANTHRANILATE ISOMERASE"/>
    <property type="match status" value="1"/>
</dbReference>
<dbReference type="Pfam" id="PF00697">
    <property type="entry name" value="PRAI"/>
    <property type="match status" value="1"/>
</dbReference>
<dbReference type="SUPFAM" id="SSF51366">
    <property type="entry name" value="Ribulose-phoshate binding barrel"/>
    <property type="match status" value="1"/>
</dbReference>
<organism>
    <name type="scientific">Halobacterium salinarum (strain ATCC 700922 / JCM 11081 / NRC-1)</name>
    <name type="common">Halobacterium halobium</name>
    <dbReference type="NCBI Taxonomy" id="64091"/>
    <lineage>
        <taxon>Archaea</taxon>
        <taxon>Methanobacteriati</taxon>
        <taxon>Methanobacteriota</taxon>
        <taxon>Stenosarchaea group</taxon>
        <taxon>Halobacteria</taxon>
        <taxon>Halobacteriales</taxon>
        <taxon>Halobacteriaceae</taxon>
        <taxon>Halobacterium</taxon>
        <taxon>Halobacterium salinarum NRC-34001</taxon>
    </lineage>
</organism>